<dbReference type="EC" id="2.7.11.1"/>
<dbReference type="EMBL" id="AF054621">
    <property type="protein sequence ID" value="AAC25955.1"/>
    <property type="molecule type" value="mRNA"/>
</dbReference>
<dbReference type="EMBL" id="AF059681">
    <property type="protein sequence ID" value="AAC77369.1"/>
    <property type="molecule type" value="mRNA"/>
</dbReference>
<dbReference type="EMBL" id="AB017332">
    <property type="protein sequence ID" value="BAA76292.1"/>
    <property type="molecule type" value="mRNA"/>
</dbReference>
<dbReference type="EMBL" id="AY661554">
    <property type="protein sequence ID" value="AAT64422.1"/>
    <property type="molecule type" value="mRNA"/>
</dbReference>
<dbReference type="EMBL" id="AC005261">
    <property type="status" value="NOT_ANNOTATED_CDS"/>
    <property type="molecule type" value="Genomic_DNA"/>
</dbReference>
<dbReference type="EMBL" id="CH471135">
    <property type="protein sequence ID" value="EAW72485.1"/>
    <property type="molecule type" value="Genomic_DNA"/>
</dbReference>
<dbReference type="EMBL" id="BC075064">
    <property type="protein sequence ID" value="AAH75064.2"/>
    <property type="molecule type" value="mRNA"/>
</dbReference>
<dbReference type="CCDS" id="CCDS33128.1">
    <molecule id="Q9UQB9-1"/>
</dbReference>
<dbReference type="CCDS" id="CCDS46205.1">
    <molecule id="Q9UQB9-3"/>
</dbReference>
<dbReference type="CCDS" id="CCDS46206.1">
    <molecule id="Q9UQB9-2"/>
</dbReference>
<dbReference type="RefSeq" id="NP_001015878.1">
    <molecule id="Q9UQB9-1"/>
    <property type="nucleotide sequence ID" value="NM_001015878.2"/>
</dbReference>
<dbReference type="RefSeq" id="NP_001015879.1">
    <molecule id="Q9UQB9-3"/>
    <property type="nucleotide sequence ID" value="NM_001015879.2"/>
</dbReference>
<dbReference type="RefSeq" id="NP_003151.2">
    <molecule id="Q9UQB9-2"/>
    <property type="nucleotide sequence ID" value="NM_003160.3"/>
</dbReference>
<dbReference type="PDB" id="6GR8">
    <property type="method" value="X-ray"/>
    <property type="resolution" value="1.75 A"/>
    <property type="chains" value="A=36-305"/>
</dbReference>
<dbReference type="PDB" id="6GR9">
    <property type="method" value="X-ray"/>
    <property type="resolution" value="2.25 A"/>
    <property type="chains" value="A=36-305"/>
</dbReference>
<dbReference type="PDB" id="9ESA">
    <property type="method" value="X-ray"/>
    <property type="resolution" value="2.80 A"/>
    <property type="chains" value="AAA/BBB=13-309"/>
</dbReference>
<dbReference type="PDBsum" id="6GR8"/>
<dbReference type="PDBsum" id="6GR9"/>
<dbReference type="PDBsum" id="9ESA"/>
<dbReference type="SMR" id="Q9UQB9"/>
<dbReference type="BioGRID" id="112671">
    <property type="interactions" value="42"/>
</dbReference>
<dbReference type="FunCoup" id="Q9UQB9">
    <property type="interactions" value="312"/>
</dbReference>
<dbReference type="IntAct" id="Q9UQB9">
    <property type="interactions" value="31"/>
</dbReference>
<dbReference type="STRING" id="9606.ENSP00000302898"/>
<dbReference type="BindingDB" id="Q9UQB9"/>
<dbReference type="ChEMBL" id="CHEMBL3935"/>
<dbReference type="DrugBank" id="DB08039">
    <property type="generic name" value="(3Z)-N,N-DIMETHYL-2-OXO-3-(4,5,6,7-TETRAHYDRO-1H-INDOL-2-YLMETHYLIDENE)-2,3-DIHYDRO-1H-INDOLE-5-SULFONAMIDE"/>
</dbReference>
<dbReference type="DrugBank" id="DB17197">
    <property type="generic name" value="AMG-900"/>
</dbReference>
<dbReference type="DrugBank" id="DB11778">
    <property type="generic name" value="Danusertib"/>
</dbReference>
<dbReference type="DrugBank" id="DB12010">
    <property type="generic name" value="Fostamatinib"/>
</dbReference>
<dbReference type="DrugBank" id="DB11694">
    <property type="generic name" value="Ilorasertib"/>
</dbReference>
<dbReference type="DrugBank" id="DB08454">
    <property type="generic name" value="N-(5-METHYL-1H-PYRAZOL-3-YL)-2-PHENYLQUINAZOLIN-4-AMINE"/>
</dbReference>
<dbReference type="DrugBank" id="DB07545">
    <property type="generic name" value="N-{3-[(4-{[3-(TRIFLUOROMETHYL)PHENYL]AMINO}PYRIMIDIN-2-YL)AMINO]PHENYL}CYCLOPROPANECARBOXAMIDE"/>
</dbReference>
<dbReference type="DrugBank" id="DB06134">
    <property type="generic name" value="SNS-314"/>
</dbReference>
<dbReference type="DrugCentral" id="Q9UQB9"/>
<dbReference type="GuidetoPHARMACOLOGY" id="1938"/>
<dbReference type="iPTMnet" id="Q9UQB9"/>
<dbReference type="PhosphoSitePlus" id="Q9UQB9"/>
<dbReference type="BioMuta" id="AURKC"/>
<dbReference type="DMDM" id="27805738"/>
<dbReference type="jPOST" id="Q9UQB9"/>
<dbReference type="MassIVE" id="Q9UQB9"/>
<dbReference type="PaxDb" id="9606-ENSP00000302898"/>
<dbReference type="PeptideAtlas" id="Q9UQB9"/>
<dbReference type="ProteomicsDB" id="85538">
    <molecule id="Q9UQB9-1"/>
</dbReference>
<dbReference type="ProteomicsDB" id="85539">
    <molecule id="Q9UQB9-2"/>
</dbReference>
<dbReference type="ProteomicsDB" id="85540">
    <molecule id="Q9UQB9-3"/>
</dbReference>
<dbReference type="Pumba" id="Q9UQB9"/>
<dbReference type="Antibodypedia" id="33237">
    <property type="antibodies" value="506 antibodies from 29 providers"/>
</dbReference>
<dbReference type="DNASU" id="6795"/>
<dbReference type="Ensembl" id="ENST00000302804.12">
    <molecule id="Q9UQB9-1"/>
    <property type="protein sequence ID" value="ENSP00000302898.6"/>
    <property type="gene ID" value="ENSG00000105146.14"/>
</dbReference>
<dbReference type="Ensembl" id="ENST00000415300.6">
    <molecule id="Q9UQB9-3"/>
    <property type="protein sequence ID" value="ENSP00000407162.1"/>
    <property type="gene ID" value="ENSG00000105146.14"/>
</dbReference>
<dbReference type="Ensembl" id="ENST00000598785.5">
    <molecule id="Q9UQB9-2"/>
    <property type="protein sequence ID" value="ENSP00000471830.1"/>
    <property type="gene ID" value="ENSG00000105146.14"/>
</dbReference>
<dbReference type="GeneID" id="6795"/>
<dbReference type="KEGG" id="hsa:6795"/>
<dbReference type="MANE-Select" id="ENST00000302804.12">
    <property type="protein sequence ID" value="ENSP00000302898.6"/>
    <property type="RefSeq nucleotide sequence ID" value="NM_001015878.2"/>
    <property type="RefSeq protein sequence ID" value="NP_001015878.1"/>
</dbReference>
<dbReference type="UCSC" id="uc002qoc.4">
    <molecule id="Q9UQB9-1"/>
    <property type="organism name" value="human"/>
</dbReference>
<dbReference type="AGR" id="HGNC:11391"/>
<dbReference type="CTD" id="6795"/>
<dbReference type="DisGeNET" id="6795"/>
<dbReference type="GeneCards" id="AURKC"/>
<dbReference type="HGNC" id="HGNC:11391">
    <property type="gene designation" value="AURKC"/>
</dbReference>
<dbReference type="HPA" id="ENSG00000105146">
    <property type="expression patterns" value="Tissue enriched (testis)"/>
</dbReference>
<dbReference type="MalaCards" id="AURKC"/>
<dbReference type="MIM" id="243060">
    <property type="type" value="phenotype"/>
</dbReference>
<dbReference type="MIM" id="603495">
    <property type="type" value="gene"/>
</dbReference>
<dbReference type="neXtProt" id="NX_Q9UQB9"/>
<dbReference type="OpenTargets" id="ENSG00000105146"/>
<dbReference type="Orphanet" id="137893">
    <property type="disease" value="Male infertility due to large-headed multiflagellar polyploid spermatozoa"/>
</dbReference>
<dbReference type="PharmGKB" id="PA36200"/>
<dbReference type="VEuPathDB" id="HostDB:ENSG00000105146"/>
<dbReference type="eggNOG" id="KOG0580">
    <property type="taxonomic scope" value="Eukaryota"/>
</dbReference>
<dbReference type="GeneTree" id="ENSGT00940000161619"/>
<dbReference type="HOGENOM" id="CLU_000288_63_0_1"/>
<dbReference type="InParanoid" id="Q9UQB9"/>
<dbReference type="OMA" id="KELQKCH"/>
<dbReference type="OrthoDB" id="377346at2759"/>
<dbReference type="PAN-GO" id="Q9UQB9">
    <property type="GO annotations" value="7 GO annotations based on evolutionary models"/>
</dbReference>
<dbReference type="PhylomeDB" id="Q9UQB9"/>
<dbReference type="TreeFam" id="TF105331"/>
<dbReference type="PathwayCommons" id="Q9UQB9"/>
<dbReference type="SignaLink" id="Q9UQB9"/>
<dbReference type="SIGNOR" id="Q9UQB9"/>
<dbReference type="BioGRID-ORCS" id="6795">
    <property type="hits" value="17 hits in 1190 CRISPR screens"/>
</dbReference>
<dbReference type="CD-CODE" id="8C2F96ED">
    <property type="entry name" value="Centrosome"/>
</dbReference>
<dbReference type="GeneWiki" id="AURKC"/>
<dbReference type="GenomeRNAi" id="6795"/>
<dbReference type="Pharos" id="Q9UQB9">
    <property type="development level" value="Tchem"/>
</dbReference>
<dbReference type="PRO" id="PR:Q9UQB9"/>
<dbReference type="Proteomes" id="UP000005640">
    <property type="component" value="Chromosome 19"/>
</dbReference>
<dbReference type="RNAct" id="Q9UQB9">
    <property type="molecule type" value="protein"/>
</dbReference>
<dbReference type="Bgee" id="ENSG00000105146">
    <property type="expression patterns" value="Expressed in oocyte and 101 other cell types or tissues"/>
</dbReference>
<dbReference type="ExpressionAtlas" id="Q9UQB9">
    <property type="expression patterns" value="baseline and differential"/>
</dbReference>
<dbReference type="GO" id="GO:0005813">
    <property type="term" value="C:centrosome"/>
    <property type="evidence" value="ECO:0000318"/>
    <property type="project" value="GO_Central"/>
</dbReference>
<dbReference type="GO" id="GO:0032133">
    <property type="term" value="C:chromosome passenger complex"/>
    <property type="evidence" value="ECO:0000318"/>
    <property type="project" value="GO_Central"/>
</dbReference>
<dbReference type="GO" id="GO:0000793">
    <property type="term" value="C:condensed chromosome"/>
    <property type="evidence" value="ECO:0000314"/>
    <property type="project" value="UniProtKB"/>
</dbReference>
<dbReference type="GO" id="GO:0005737">
    <property type="term" value="C:cytoplasm"/>
    <property type="evidence" value="ECO:0007669"/>
    <property type="project" value="UniProtKB-KW"/>
</dbReference>
<dbReference type="GO" id="GO:0000776">
    <property type="term" value="C:kinetochore"/>
    <property type="evidence" value="ECO:0000318"/>
    <property type="project" value="GO_Central"/>
</dbReference>
<dbReference type="GO" id="GO:0030496">
    <property type="term" value="C:midbody"/>
    <property type="evidence" value="ECO:0000314"/>
    <property type="project" value="UniProtKB"/>
</dbReference>
<dbReference type="GO" id="GO:0005634">
    <property type="term" value="C:nucleus"/>
    <property type="evidence" value="ECO:0000318"/>
    <property type="project" value="GO_Central"/>
</dbReference>
<dbReference type="GO" id="GO:0005819">
    <property type="term" value="C:spindle"/>
    <property type="evidence" value="ECO:0000304"/>
    <property type="project" value="UniProtKB"/>
</dbReference>
<dbReference type="GO" id="GO:0005876">
    <property type="term" value="C:spindle microtubule"/>
    <property type="evidence" value="ECO:0000318"/>
    <property type="project" value="GO_Central"/>
</dbReference>
<dbReference type="GO" id="GO:0051233">
    <property type="term" value="C:spindle midzone"/>
    <property type="evidence" value="ECO:0000314"/>
    <property type="project" value="UniProtKB"/>
</dbReference>
<dbReference type="GO" id="GO:0000922">
    <property type="term" value="C:spindle pole"/>
    <property type="evidence" value="ECO:0000318"/>
    <property type="project" value="GO_Central"/>
</dbReference>
<dbReference type="GO" id="GO:0005524">
    <property type="term" value="F:ATP binding"/>
    <property type="evidence" value="ECO:0007669"/>
    <property type="project" value="UniProtKB-KW"/>
</dbReference>
<dbReference type="GO" id="GO:0004672">
    <property type="term" value="F:protein kinase activity"/>
    <property type="evidence" value="ECO:0000314"/>
    <property type="project" value="UniProtKB"/>
</dbReference>
<dbReference type="GO" id="GO:0106310">
    <property type="term" value="F:protein serine kinase activity"/>
    <property type="evidence" value="ECO:0007669"/>
    <property type="project" value="RHEA"/>
</dbReference>
<dbReference type="GO" id="GO:0004674">
    <property type="term" value="F:protein serine/threonine kinase activity"/>
    <property type="evidence" value="ECO:0007669"/>
    <property type="project" value="UniProtKB-KW"/>
</dbReference>
<dbReference type="GO" id="GO:0004712">
    <property type="term" value="F:protein serine/threonine/tyrosine kinase activity"/>
    <property type="evidence" value="ECO:0000304"/>
    <property type="project" value="UniProtKB"/>
</dbReference>
<dbReference type="GO" id="GO:0008608">
    <property type="term" value="P:attachment of spindle microtubules to kinetochore"/>
    <property type="evidence" value="ECO:0000304"/>
    <property type="project" value="UniProtKB"/>
</dbReference>
<dbReference type="GO" id="GO:0051301">
    <property type="term" value="P:cell division"/>
    <property type="evidence" value="ECO:0007669"/>
    <property type="project" value="UniProtKB-KW"/>
</dbReference>
<dbReference type="GO" id="GO:0051321">
    <property type="term" value="P:meiotic cell cycle"/>
    <property type="evidence" value="ECO:0007669"/>
    <property type="project" value="UniProtKB-KW"/>
</dbReference>
<dbReference type="GO" id="GO:0051256">
    <property type="term" value="P:mitotic spindle midzone assembly"/>
    <property type="evidence" value="ECO:0000304"/>
    <property type="project" value="UniProtKB"/>
</dbReference>
<dbReference type="GO" id="GO:0007052">
    <property type="term" value="P:mitotic spindle organization"/>
    <property type="evidence" value="ECO:0000318"/>
    <property type="project" value="GO_Central"/>
</dbReference>
<dbReference type="GO" id="GO:0032467">
    <property type="term" value="P:positive regulation of cytokinesis"/>
    <property type="evidence" value="ECO:0000304"/>
    <property type="project" value="UniProtKB"/>
</dbReference>
<dbReference type="GO" id="GO:0006468">
    <property type="term" value="P:protein phosphorylation"/>
    <property type="evidence" value="ECO:0000314"/>
    <property type="project" value="UniProtKB"/>
</dbReference>
<dbReference type="GO" id="GO:0032465">
    <property type="term" value="P:regulation of cytokinesis"/>
    <property type="evidence" value="ECO:0000318"/>
    <property type="project" value="GO_Central"/>
</dbReference>
<dbReference type="CDD" id="cd14117">
    <property type="entry name" value="STKc_Aurora-B_like"/>
    <property type="match status" value="1"/>
</dbReference>
<dbReference type="FunFam" id="1.10.510.10:FF:000887">
    <property type="entry name" value="Aurora B kinase"/>
    <property type="match status" value="1"/>
</dbReference>
<dbReference type="FunFam" id="3.30.200.20:FF:000042">
    <property type="entry name" value="Aurora kinase A"/>
    <property type="match status" value="1"/>
</dbReference>
<dbReference type="Gene3D" id="3.30.200.20">
    <property type="entry name" value="Phosphorylase Kinase, domain 1"/>
    <property type="match status" value="1"/>
</dbReference>
<dbReference type="Gene3D" id="1.10.510.10">
    <property type="entry name" value="Transferase(Phosphotransferase) domain 1"/>
    <property type="match status" value="1"/>
</dbReference>
<dbReference type="InterPro" id="IPR030616">
    <property type="entry name" value="Aur-like"/>
</dbReference>
<dbReference type="InterPro" id="IPR011009">
    <property type="entry name" value="Kinase-like_dom_sf"/>
</dbReference>
<dbReference type="InterPro" id="IPR000719">
    <property type="entry name" value="Prot_kinase_dom"/>
</dbReference>
<dbReference type="InterPro" id="IPR017441">
    <property type="entry name" value="Protein_kinase_ATP_BS"/>
</dbReference>
<dbReference type="InterPro" id="IPR008271">
    <property type="entry name" value="Ser/Thr_kinase_AS"/>
</dbReference>
<dbReference type="PANTHER" id="PTHR24350">
    <property type="entry name" value="SERINE/THREONINE-PROTEIN KINASE IAL-RELATED"/>
    <property type="match status" value="1"/>
</dbReference>
<dbReference type="Pfam" id="PF00069">
    <property type="entry name" value="Pkinase"/>
    <property type="match status" value="1"/>
</dbReference>
<dbReference type="PIRSF" id="PIRSF000654">
    <property type="entry name" value="Integrin-linked_kinase"/>
    <property type="match status" value="1"/>
</dbReference>
<dbReference type="SMART" id="SM00220">
    <property type="entry name" value="S_TKc"/>
    <property type="match status" value="1"/>
</dbReference>
<dbReference type="SUPFAM" id="SSF56112">
    <property type="entry name" value="Protein kinase-like (PK-like)"/>
    <property type="match status" value="1"/>
</dbReference>
<dbReference type="PROSITE" id="PS00107">
    <property type="entry name" value="PROTEIN_KINASE_ATP"/>
    <property type="match status" value="1"/>
</dbReference>
<dbReference type="PROSITE" id="PS50011">
    <property type="entry name" value="PROTEIN_KINASE_DOM"/>
    <property type="match status" value="1"/>
</dbReference>
<dbReference type="PROSITE" id="PS00108">
    <property type="entry name" value="PROTEIN_KINASE_ST"/>
    <property type="match status" value="1"/>
</dbReference>
<reference key="1">
    <citation type="journal article" date="1998" name="DNA Cell Biol.">
        <title>Protein kinase profile of sperm and eggs: cloning and characterization of two novel testis-specific protein kinases (AIE1, AIE2) related to yeast and fly chromosome segregation regulators.</title>
        <authorList>
            <person name="Tseng T.-C."/>
            <person name="Chen S.-H."/>
            <person name="Hsu Y.-P.P."/>
            <person name="Tang T.K."/>
        </authorList>
    </citation>
    <scope>NUCLEOTIDE SEQUENCE [MRNA] (ISOFORM 1)</scope>
    <scope>SUBCELLULAR LOCATION</scope>
    <source>
        <tissue>Testis</tissue>
    </source>
</reference>
<reference key="2">
    <citation type="journal article" date="1998" name="Genomics">
        <title>Cloning of STK13, a third human protein kinase related to Drosophila aurora and budding yeast Ipl1 that maps on chromosome 19q13.3-ter.</title>
        <authorList>
            <person name="Bernard M."/>
            <person name="Sanseau P."/>
            <person name="Henry C."/>
            <person name="Couturier A."/>
            <person name="Prigent C."/>
        </authorList>
    </citation>
    <scope>NUCLEOTIDE SEQUENCE [MRNA] (ISOFORM 2)</scope>
    <source>
        <tissue>Placenta</tissue>
    </source>
</reference>
<reference key="3">
    <citation type="journal article" date="1999" name="J. Biol. Chem.">
        <title>Cell cycle-dependent expression and centrosome localization of a third human Aurora/Ipl1-related protein kinase, AIK3.</title>
        <authorList>
            <person name="Kimura M."/>
            <person name="Matsuda Y."/>
            <person name="Yoshioka T."/>
            <person name="Okano Y."/>
        </authorList>
    </citation>
    <scope>NUCLEOTIDE SEQUENCE [MRNA] (ISOFORM 1)</scope>
    <scope>INDUCTION</scope>
    <scope>SUBCELLULAR LOCATION</scope>
    <source>
        <tissue>Testis</tissue>
    </source>
</reference>
<reference key="4">
    <citation type="journal article" date="2005" name="Biochem. Biophys. Res. Commun.">
        <title>Cloning and characterization of a novel human Aurora C splicing variant.</title>
        <authorList>
            <person name="Yan X."/>
            <person name="Wu Y."/>
            <person name="Li Q."/>
            <person name="Cao L."/>
            <person name="Liu X."/>
            <person name="Saiyin H."/>
            <person name="Yu L."/>
        </authorList>
    </citation>
    <scope>NUCLEOTIDE SEQUENCE [MRNA] (ISOFORM 3)</scope>
    <scope>TISSUE SPECIFICITY</scope>
    <scope>FUNCTION</scope>
    <scope>MUTAGENESIS OF THR-198</scope>
    <scope>SUBCELLULAR LOCATION</scope>
</reference>
<reference key="5">
    <citation type="journal article" date="2004" name="Nature">
        <title>The DNA sequence and biology of human chromosome 19.</title>
        <authorList>
            <person name="Grimwood J."/>
            <person name="Gordon L.A."/>
            <person name="Olsen A.S."/>
            <person name="Terry A."/>
            <person name="Schmutz J."/>
            <person name="Lamerdin J.E."/>
            <person name="Hellsten U."/>
            <person name="Goodstein D."/>
            <person name="Couronne O."/>
            <person name="Tran-Gyamfi M."/>
            <person name="Aerts A."/>
            <person name="Altherr M."/>
            <person name="Ashworth L."/>
            <person name="Bajorek E."/>
            <person name="Black S."/>
            <person name="Branscomb E."/>
            <person name="Caenepeel S."/>
            <person name="Carrano A.V."/>
            <person name="Caoile C."/>
            <person name="Chan Y.M."/>
            <person name="Christensen M."/>
            <person name="Cleland C.A."/>
            <person name="Copeland A."/>
            <person name="Dalin E."/>
            <person name="Dehal P."/>
            <person name="Denys M."/>
            <person name="Detter J.C."/>
            <person name="Escobar J."/>
            <person name="Flowers D."/>
            <person name="Fotopulos D."/>
            <person name="Garcia C."/>
            <person name="Georgescu A.M."/>
            <person name="Glavina T."/>
            <person name="Gomez M."/>
            <person name="Gonzales E."/>
            <person name="Groza M."/>
            <person name="Hammon N."/>
            <person name="Hawkins T."/>
            <person name="Haydu L."/>
            <person name="Ho I."/>
            <person name="Huang W."/>
            <person name="Israni S."/>
            <person name="Jett J."/>
            <person name="Kadner K."/>
            <person name="Kimball H."/>
            <person name="Kobayashi A."/>
            <person name="Larionov V."/>
            <person name="Leem S.-H."/>
            <person name="Lopez F."/>
            <person name="Lou Y."/>
            <person name="Lowry S."/>
            <person name="Malfatti S."/>
            <person name="Martinez D."/>
            <person name="McCready P.M."/>
            <person name="Medina C."/>
            <person name="Morgan J."/>
            <person name="Nelson K."/>
            <person name="Nolan M."/>
            <person name="Ovcharenko I."/>
            <person name="Pitluck S."/>
            <person name="Pollard M."/>
            <person name="Popkie A.P."/>
            <person name="Predki P."/>
            <person name="Quan G."/>
            <person name="Ramirez L."/>
            <person name="Rash S."/>
            <person name="Retterer J."/>
            <person name="Rodriguez A."/>
            <person name="Rogers S."/>
            <person name="Salamov A."/>
            <person name="Salazar A."/>
            <person name="She X."/>
            <person name="Smith D."/>
            <person name="Slezak T."/>
            <person name="Solovyev V."/>
            <person name="Thayer N."/>
            <person name="Tice H."/>
            <person name="Tsai M."/>
            <person name="Ustaszewska A."/>
            <person name="Vo N."/>
            <person name="Wagner M."/>
            <person name="Wheeler J."/>
            <person name="Wu K."/>
            <person name="Xie G."/>
            <person name="Yang J."/>
            <person name="Dubchak I."/>
            <person name="Furey T.S."/>
            <person name="DeJong P."/>
            <person name="Dickson M."/>
            <person name="Gordon D."/>
            <person name="Eichler E.E."/>
            <person name="Pennacchio L.A."/>
            <person name="Richardson P."/>
            <person name="Stubbs L."/>
            <person name="Rokhsar D.S."/>
            <person name="Myers R.M."/>
            <person name="Rubin E.M."/>
            <person name="Lucas S.M."/>
        </authorList>
    </citation>
    <scope>NUCLEOTIDE SEQUENCE [LARGE SCALE GENOMIC DNA]</scope>
</reference>
<reference key="6">
    <citation type="submission" date="2005-07" db="EMBL/GenBank/DDBJ databases">
        <authorList>
            <person name="Mural R.J."/>
            <person name="Istrail S."/>
            <person name="Sutton G.G."/>
            <person name="Florea L."/>
            <person name="Halpern A.L."/>
            <person name="Mobarry C.M."/>
            <person name="Lippert R."/>
            <person name="Walenz B."/>
            <person name="Shatkay H."/>
            <person name="Dew I."/>
            <person name="Miller J.R."/>
            <person name="Flanigan M.J."/>
            <person name="Edwards N.J."/>
            <person name="Bolanos R."/>
            <person name="Fasulo D."/>
            <person name="Halldorsson B.V."/>
            <person name="Hannenhalli S."/>
            <person name="Turner R."/>
            <person name="Yooseph S."/>
            <person name="Lu F."/>
            <person name="Nusskern D.R."/>
            <person name="Shue B.C."/>
            <person name="Zheng X.H."/>
            <person name="Zhong F."/>
            <person name="Delcher A.L."/>
            <person name="Huson D.H."/>
            <person name="Kravitz S.A."/>
            <person name="Mouchard L."/>
            <person name="Reinert K."/>
            <person name="Remington K.A."/>
            <person name="Clark A.G."/>
            <person name="Waterman M.S."/>
            <person name="Eichler E.E."/>
            <person name="Adams M.D."/>
            <person name="Hunkapiller M.W."/>
            <person name="Myers E.W."/>
            <person name="Venter J.C."/>
        </authorList>
    </citation>
    <scope>NUCLEOTIDE SEQUENCE [LARGE SCALE GENOMIC DNA]</scope>
</reference>
<reference key="7">
    <citation type="journal article" date="2004" name="Genome Res.">
        <title>The status, quality, and expansion of the NIH full-length cDNA project: the Mammalian Gene Collection (MGC).</title>
        <authorList>
            <consortium name="The MGC Project Team"/>
        </authorList>
    </citation>
    <scope>NUCLEOTIDE SEQUENCE [LARGE SCALE MRNA] (ISOFORM 2)</scope>
    <source>
        <tissue>Brain</tissue>
    </source>
</reference>
<reference key="8">
    <citation type="journal article" date="2004" name="Cell Motil. Cytoskeleton">
        <title>Aurora-C kinase is a novel chromosomal passenger protein that can complement Aurora-B kinase function in mitotic cells.</title>
        <authorList>
            <person name="Sasai K."/>
            <person name="Katayama H."/>
            <person name="Stenoien D.L."/>
            <person name="Fujii S."/>
            <person name="Honda R."/>
            <person name="Kimura M."/>
            <person name="Okano Y."/>
            <person name="Tatsuka M."/>
            <person name="Suzuki F."/>
            <person name="Nigg E.A."/>
            <person name="Earnshaw W.C."/>
            <person name="Brinkley W.R."/>
            <person name="Sen S."/>
        </authorList>
    </citation>
    <scope>INDUCTION</scope>
    <scope>FUNCTION</scope>
    <scope>SUBCELLULAR LOCATION</scope>
    <scope>INTERACTION WITH INCENP</scope>
    <scope>MUTAGENESIS OF LYS-72</scope>
</reference>
<reference key="9">
    <citation type="journal article" date="2004" name="J. Biol. Chem.">
        <title>Direct association with inner centromere protein (INCENP) activates the novel chromosomal passenger protein, Aurora-C.</title>
        <authorList>
            <person name="Li X."/>
            <person name="Sakashita G."/>
            <person name="Matsuzaki H."/>
            <person name="Sugimoto K."/>
            <person name="Kimura K."/>
            <person name="Hanaoka F."/>
            <person name="Taniguchi H."/>
            <person name="Furukawa K."/>
            <person name="Urano T."/>
        </authorList>
    </citation>
    <scope>IDENTIFICATION IN THE CDC COMPLEX</scope>
    <scope>SUBCELLULAR LOCATION</scope>
    <scope>ACTIVITY REGULATION</scope>
    <scope>FUNCTION</scope>
    <scope>MUTAGENESIS OF LYS-72 AND THR-198</scope>
</reference>
<reference key="10">
    <citation type="journal article" date="2005" name="Genes Cells">
        <title>Aurora C is directly associated with Survivin and required for cytokinesis.</title>
        <authorList>
            <person name="Yan X."/>
            <person name="Cao L."/>
            <person name="Li Q."/>
            <person name="Wu Y."/>
            <person name="Zhang H."/>
            <person name="Saiyin H."/>
            <person name="Liu X."/>
            <person name="Zhang X."/>
            <person name="Shi Q."/>
            <person name="Yu L."/>
        </authorList>
    </citation>
    <scope>IDENTIFICATION IN THE CDC COMPLEX</scope>
    <scope>INTERACTION WITH BIRC5</scope>
    <scope>SUBCELLULAR LOCATION</scope>
    <scope>FUNCTION</scope>
    <scope>MUTAGENESIS OF ASP-166</scope>
</reference>
<reference key="11">
    <citation type="journal article" date="2007" name="Nat. Genet.">
        <title>Homozygous mutation of AURKC yields large-headed polyploid spermatozoa and causes male infertility.</title>
        <authorList>
            <person name="Dieterich K."/>
            <person name="Soto Rifo R."/>
            <person name="Faure A.K."/>
            <person name="Hennebicq S."/>
            <person name="Ben Amar B."/>
            <person name="Zahi M."/>
            <person name="Perrin J."/>
            <person name="Martinez D."/>
            <person name="Sele B."/>
            <person name="Jouk P.-S."/>
            <person name="Ohlmann T."/>
            <person name="Rousseaux S."/>
            <person name="Lunardi J."/>
            <person name="Ray P.F."/>
        </authorList>
    </citation>
    <scope>INVOLVEMENT IN SPGF5</scope>
</reference>
<reference key="12">
    <citation type="journal article" date="2011" name="Biochem. Biophys. Res. Commun.">
        <title>Aurora-C interacts with and phosphorylates the transforming acidic coiled-coil 1 protein.</title>
        <authorList>
            <person name="Gabillard J.C."/>
            <person name="Ulisse S."/>
            <person name="Baldini E."/>
            <person name="Sorrenti S."/>
            <person name="Cremet J.Y."/>
            <person name="Coccaro C."/>
            <person name="Prigent C."/>
            <person name="D'Armiento M."/>
            <person name="Arlot-Bonnemains Y."/>
        </authorList>
    </citation>
    <scope>FUNCTION</scope>
    <scope>SUBCELLULAR LOCATION</scope>
    <scope>INTERACTION WITH TACC1</scope>
</reference>
<reference key="13">
    <citation type="journal article" date="2011" name="Hum. Reprod.">
        <title>A role for Aurora C in the chromosomal passenger complex during human preimplantation embryo development.</title>
        <authorList>
            <person name="Avo Santos M."/>
            <person name="van de Werken C."/>
            <person name="de Vries M."/>
            <person name="Jahr H."/>
            <person name="Vromans M.J."/>
            <person name="Laven J.S."/>
            <person name="Fauser B.C."/>
            <person name="Kops G.J."/>
            <person name="Lens S.M."/>
            <person name="Baart E.B."/>
        </authorList>
    </citation>
    <scope>FUNCTION</scope>
    <scope>SUBCELLULAR LOCATION</scope>
</reference>
<reference key="14">
    <citation type="journal article" date="2011" name="Mol. Hum. Reprod.">
        <title>A new AURKC mutation causing macrozoospermia: implications for human spermatogenesis and clinical diagnosis.</title>
        <authorList>
            <person name="Ben Khelifa M."/>
            <person name="Zouari R."/>
            <person name="Harbuz R."/>
            <person name="Halouani L."/>
            <person name="Arnoult C."/>
            <person name="Lunardi J."/>
            <person name="Ray P.F."/>
        </authorList>
    </citation>
    <scope>INVOLVEMENT IN SPGF5</scope>
</reference>
<reference key="15">
    <citation type="journal article" date="2016" name="PLoS ONE">
        <title>Aurora-C interactions with survivin and INCENP reveal shared and distinct features compared with Aurora-B chromosome passenger protein complex.</title>
        <authorList>
            <person name="Sasai K."/>
            <person name="Katayama H."/>
            <person name="Hawke D.H."/>
            <person name="Sen S."/>
        </authorList>
    </citation>
    <scope>INTERACTION WITH BIRC5</scope>
    <scope>SUBUNIT</scope>
    <scope>FUNCTION</scope>
    <scope>SUBCELLULAR LOCATION</scope>
</reference>
<reference key="16">
    <citation type="journal article" date="2007" name="Nature">
        <title>Patterns of somatic mutation in human cancer genomes.</title>
        <authorList>
            <person name="Greenman C."/>
            <person name="Stephens P."/>
            <person name="Smith R."/>
            <person name="Dalgliesh G.L."/>
            <person name="Hunter C."/>
            <person name="Bignell G."/>
            <person name="Davies H."/>
            <person name="Teague J."/>
            <person name="Butler A."/>
            <person name="Stevens C."/>
            <person name="Edkins S."/>
            <person name="O'Meara S."/>
            <person name="Vastrik I."/>
            <person name="Schmidt E.E."/>
            <person name="Avis T."/>
            <person name="Barthorpe S."/>
            <person name="Bhamra G."/>
            <person name="Buck G."/>
            <person name="Choudhury B."/>
            <person name="Clements J."/>
            <person name="Cole J."/>
            <person name="Dicks E."/>
            <person name="Forbes S."/>
            <person name="Gray K."/>
            <person name="Halliday K."/>
            <person name="Harrison R."/>
            <person name="Hills K."/>
            <person name="Hinton J."/>
            <person name="Jenkinson A."/>
            <person name="Jones D."/>
            <person name="Menzies A."/>
            <person name="Mironenko T."/>
            <person name="Perry J."/>
            <person name="Raine K."/>
            <person name="Richardson D."/>
            <person name="Shepherd R."/>
            <person name="Small A."/>
            <person name="Tofts C."/>
            <person name="Varian J."/>
            <person name="Webb T."/>
            <person name="West S."/>
            <person name="Widaa S."/>
            <person name="Yates A."/>
            <person name="Cahill D.P."/>
            <person name="Louis D.N."/>
            <person name="Goldstraw P."/>
            <person name="Nicholson A.G."/>
            <person name="Brasseur F."/>
            <person name="Looijenga L."/>
            <person name="Weber B.L."/>
            <person name="Chiew Y.-E."/>
            <person name="DeFazio A."/>
            <person name="Greaves M.F."/>
            <person name="Green A.R."/>
            <person name="Campbell P."/>
            <person name="Birney E."/>
            <person name="Easton D.F."/>
            <person name="Chenevix-Trench G."/>
            <person name="Tan M.-H."/>
            <person name="Khoo S.K."/>
            <person name="Teh B.T."/>
            <person name="Yuen S.T."/>
            <person name="Leung S.Y."/>
            <person name="Wooster R."/>
            <person name="Futreal P.A."/>
            <person name="Stratton M.R."/>
        </authorList>
    </citation>
    <scope>VARIANTS [LARGE SCALE ANALYSIS] GLU-52; GLN-148 AND GLN-244</scope>
</reference>
<proteinExistence type="evidence at protein level"/>
<name>AURKC_HUMAN</name>
<sequence>MSSPRAVVQLGKAQPAGEELATANQTAQQPSSPAMRRLTVDDFEIGRPLGKGKFGNVYLARLKESHFIVALKVLFKSQIEKEGLEHQLRREIEIQAHLQHPNILRLYNYFHDARRVYLILEYAPRGELYKELQKSEKLDEQRTATIIEELADALTYCHDKKVIHRDIKPENLLLGFRGEVKIADFGWSVHTPSLRRKTMCGTLDYLPPEMIEGRTYDEKVDLWCIGVLCYELLVGYPPFESASHSETYRRILKVDVRFPLSMPLGARDLISRLLRYQPLERLPLAQILKHPWVQAHSRRVLPPCAQMAS</sequence>
<comment type="function">
    <text evidence="6 7 8 9 12 13 15">Serine/threonine-protein kinase component of the chromosomal passenger complex (CPC), a complex that acts as a key regulator of mitosis. The CPC complex has essential functions at the centromere in ensuring correct chromosome alignment and segregation and is required for chromatin-induced microtubule stabilization and spindle assembly. Also plays a role in meiosis and more particularly in spermatogenesis. Has redundant cellular functions with AURKB and can rescue an AURKB knockdown. Like AURKB, AURKC phosphorylates histone H3 at 'Ser-10' and 'Ser-28'. AURKC phosphorylates the CPC complex subunits BIRC5/survivin and INCENP leading to increased AURKC activity. Phosphorylates TACC1, another protein involved in cell division, at 'Ser-228'.</text>
</comment>
<comment type="catalytic activity">
    <reaction>
        <text>L-seryl-[protein] + ATP = O-phospho-L-seryl-[protein] + ADP + H(+)</text>
        <dbReference type="Rhea" id="RHEA:17989"/>
        <dbReference type="Rhea" id="RHEA-COMP:9863"/>
        <dbReference type="Rhea" id="RHEA-COMP:11604"/>
        <dbReference type="ChEBI" id="CHEBI:15378"/>
        <dbReference type="ChEBI" id="CHEBI:29999"/>
        <dbReference type="ChEBI" id="CHEBI:30616"/>
        <dbReference type="ChEBI" id="CHEBI:83421"/>
        <dbReference type="ChEBI" id="CHEBI:456216"/>
        <dbReference type="EC" id="2.7.11.1"/>
    </reaction>
</comment>
<comment type="catalytic activity">
    <reaction>
        <text>L-threonyl-[protein] + ATP = O-phospho-L-threonyl-[protein] + ADP + H(+)</text>
        <dbReference type="Rhea" id="RHEA:46608"/>
        <dbReference type="Rhea" id="RHEA-COMP:11060"/>
        <dbReference type="Rhea" id="RHEA-COMP:11605"/>
        <dbReference type="ChEBI" id="CHEBI:15378"/>
        <dbReference type="ChEBI" id="CHEBI:30013"/>
        <dbReference type="ChEBI" id="CHEBI:30616"/>
        <dbReference type="ChEBI" id="CHEBI:61977"/>
        <dbReference type="ChEBI" id="CHEBI:456216"/>
        <dbReference type="EC" id="2.7.11.1"/>
    </reaction>
</comment>
<comment type="activity regulation">
    <text evidence="6">Okadaic acid, an inhibitor of protein phosphatase 1 (PP1), protein phosphatase 2A (PP2A) and protein phosphatase 5 (PP5), increases AURKC activity. AURKC is also stabilized through its interaction with INCENP, which also acts as an activator.</text>
</comment>
<comment type="subunit">
    <text evidence="6 7 9 13 15">Component of the chromosomal passenger complex (CPC) composed of at least BIRC5/survivin, CDCA8/borealin, INCENP, AURKB or AURKC; predominantly independent AURKB- and AURKC-containing complexes exist; in the complex interacts directly with BIRC5/survivin and INCENP. Interacts with TACC1.</text>
</comment>
<comment type="interaction">
    <interactant intactId="EBI-3926851">
        <id>Q9UQB9</id>
    </interactant>
    <interactant intactId="EBI-518823">
        <id>O15392</id>
        <label>BIRC5</label>
    </interactant>
    <organismsDiffer>false</organismsDiffer>
    <experiments>10</experiments>
</comment>
<comment type="interaction">
    <interactant intactId="EBI-3926851">
        <id>Q9UQB9</id>
    </interactant>
    <interactant intactId="EBI-517623">
        <id>Q96CA5</id>
        <label>BIRC7</label>
    </interactant>
    <organismsDiffer>false</organismsDiffer>
    <experiments>3</experiments>
</comment>
<comment type="interaction">
    <interactant intactId="EBI-3926851">
        <id>Q9UQB9</id>
    </interactant>
    <interactant intactId="EBI-10179719">
        <id>A2RRN7</id>
        <label>CADPS</label>
    </interactant>
    <organismsDiffer>false</organismsDiffer>
    <experiments>3</experiments>
</comment>
<comment type="interaction">
    <interactant intactId="EBI-3926851">
        <id>Q9UQB9</id>
    </interactant>
    <interactant intactId="EBI-307907">
        <id>Q9NQS7</id>
        <label>INCENP</label>
    </interactant>
    <organismsDiffer>false</organismsDiffer>
    <experiments>20</experiments>
</comment>
<comment type="interaction">
    <interactant intactId="EBI-3926851">
        <id>Q9UQB9</id>
    </interactant>
    <interactant intactId="EBI-9087860">
        <id>P32243-2</id>
        <label>OTX2</label>
    </interactant>
    <organismsDiffer>false</organismsDiffer>
    <experiments>4</experiments>
</comment>
<comment type="subcellular location">
    <subcellularLocation>
        <location>Nucleus</location>
    </subcellularLocation>
    <subcellularLocation>
        <location>Chromosome</location>
    </subcellularLocation>
    <subcellularLocation>
        <location evidence="15">Chromosome</location>
        <location evidence="15">Centromere</location>
    </subcellularLocation>
    <subcellularLocation>
        <location evidence="9">Cytoplasm</location>
        <location evidence="9">Cytoskeleton</location>
        <location evidence="9">Spindle</location>
    </subcellularLocation>
    <text evidence="13">Distributes in the condensed chromosomes during prophase to metaphase. After entering anaphase, there is a dissociation from separated chromosomes and a redistribution to midzone microtubules, and finally remains in the midbody during cytokinesis.</text>
</comment>
<comment type="alternative products">
    <event type="alternative splicing"/>
    <isoform>
        <id>Q9UQB9-1</id>
        <name>1</name>
        <sequence type="displayed"/>
    </isoform>
    <isoform>
        <id>Q9UQB9-2</id>
        <name>2</name>
        <sequence type="described" ref="VSP_004872"/>
    </isoform>
    <isoform>
        <id>Q9UQB9-3</id>
        <name>3</name>
        <name>Aurora C-SV</name>
        <sequence type="described" ref="VSP_041095"/>
    </isoform>
</comment>
<comment type="tissue specificity">
    <text evidence="8">Isoform 1 and isoform 2 are expressed in testis. Elevated expression levels were seen only in a subset of cancer cell lines such as Hep-G2, Huh-7 and HeLa. Expression is maximum at M phase.</text>
</comment>
<comment type="induction">
    <text evidence="5 7">Expression is cell cycle-regulated, with an increase during G2 and M phases.</text>
</comment>
<comment type="disease" evidence="11 14">
    <disease id="DI-01927">
        <name>Spermatogenic failure 5</name>
        <acronym>SPGF5</acronym>
        <description>An infertility disorder caused by spermatogenesis defects. Semen from affected men show close to 100% morphologically abnormal multiflagellar spermatozoa with low motility, oversized irregular heads, and abnormal midpiece and acrosome.</description>
        <dbReference type="MIM" id="243060"/>
    </disease>
    <text>The disease is caused by variants affecting the gene represented in this entry.</text>
</comment>
<comment type="similarity">
    <text evidence="2">Belongs to the protein kinase superfamily. Ser/Thr protein kinase family. Aurora subfamily.</text>
</comment>
<organism>
    <name type="scientific">Homo sapiens</name>
    <name type="common">Human</name>
    <dbReference type="NCBI Taxonomy" id="9606"/>
    <lineage>
        <taxon>Eukaryota</taxon>
        <taxon>Metazoa</taxon>
        <taxon>Chordata</taxon>
        <taxon>Craniata</taxon>
        <taxon>Vertebrata</taxon>
        <taxon>Euteleostomi</taxon>
        <taxon>Mammalia</taxon>
        <taxon>Eutheria</taxon>
        <taxon>Euarchontoglires</taxon>
        <taxon>Primates</taxon>
        <taxon>Haplorrhini</taxon>
        <taxon>Catarrhini</taxon>
        <taxon>Hominidae</taxon>
        <taxon>Homo</taxon>
    </lineage>
</organism>
<accession>Q9UQB9</accession>
<accession>O60681</accession>
<accession>O75442</accession>
<accession>Q6AZY8</accession>
<accession>Q6DLZ0</accession>
<accession>Q9UPK5</accession>
<feature type="chain" id="PRO_0000085660" description="Aurora kinase C">
    <location>
        <begin position="1"/>
        <end position="309"/>
    </location>
</feature>
<feature type="domain" description="Protein kinase" evidence="2">
    <location>
        <begin position="43"/>
        <end position="293"/>
    </location>
</feature>
<feature type="region of interest" description="Disordered" evidence="4">
    <location>
        <begin position="1"/>
        <end position="33"/>
    </location>
</feature>
<feature type="region of interest" description="Interaction with BIRC5" evidence="15">
    <location>
        <begin position="292"/>
        <end position="309"/>
    </location>
</feature>
<feature type="compositionally biased region" description="Polar residues" evidence="4">
    <location>
        <begin position="22"/>
        <end position="32"/>
    </location>
</feature>
<feature type="active site" description="Proton acceptor" evidence="2 3">
    <location>
        <position position="166"/>
    </location>
</feature>
<feature type="binding site" evidence="2">
    <location>
        <begin position="49"/>
        <end position="57"/>
    </location>
    <ligand>
        <name>ATP</name>
        <dbReference type="ChEBI" id="CHEBI:30616"/>
    </ligand>
</feature>
<feature type="binding site" evidence="2">
    <location>
        <position position="72"/>
    </location>
    <ligand>
        <name>ATP</name>
        <dbReference type="ChEBI" id="CHEBI:30616"/>
    </ligand>
</feature>
<feature type="modified residue" description="Phosphothreonine; by PKA" evidence="1">
    <location>
        <position position="198"/>
    </location>
</feature>
<feature type="splice variant" id="VSP_004872" description="In isoform 2." evidence="16 18">
    <location>
        <begin position="1"/>
        <end position="34"/>
    </location>
</feature>
<feature type="splice variant" id="VSP_041095" description="In isoform 3." evidence="17">
    <original>MSSPRAVVQLGKAQPAGEEL</original>
    <variation>M</variation>
    <location>
        <begin position="1"/>
        <end position="20"/>
    </location>
</feature>
<feature type="sequence variant" id="VAR_040385" description="In a lung adenocarcinoma sample; somatic mutation; dbSNP:rs2122802401." evidence="10">
    <original>G</original>
    <variation>E</variation>
    <location>
        <position position="52"/>
    </location>
</feature>
<feature type="sequence variant" id="VAR_040386" description="In a lung squamous cell carcinoma sample; somatic mutation; dbSNP:rs2087514266." evidence="10">
    <original>E</original>
    <variation>Q</variation>
    <location>
        <position position="148"/>
    </location>
</feature>
<feature type="sequence variant" id="VAR_040387" description="In a lung adenocarcinoma sample; somatic mutation." evidence="10">
    <original>H</original>
    <variation>Q</variation>
    <location>
        <position position="244"/>
    </location>
</feature>
<feature type="mutagenesis site" description="Impairs kinase activity." evidence="6 7">
    <original>K</original>
    <variation>R</variation>
    <location>
        <position position="72"/>
    </location>
</feature>
<feature type="mutagenesis site" description="Impairs kinase activity, and keeps AURKC with the chromosomes until the end of mitosis." evidence="9">
    <original>D</original>
    <variation>Y</variation>
    <location>
        <position position="166"/>
    </location>
</feature>
<feature type="mutagenesis site" description="Impairs kinase activity." evidence="6 8">
    <original>T</original>
    <variation>A</variation>
    <location>
        <position position="198"/>
    </location>
</feature>
<feature type="sequence conflict" description="In Ref. 1; AAC25955." evidence="19" ref="1">
    <original>Y</original>
    <variation>H</variation>
    <location>
        <position position="109"/>
    </location>
</feature>
<feature type="sequence conflict" description="In Ref. 2; AAC77369." evidence="19" ref="2">
    <original>L</original>
    <variation>V</variation>
    <location>
        <position position="150"/>
    </location>
</feature>
<feature type="sequence conflict" description="In Ref. 2; AAC77369." evidence="19" ref="2">
    <original>SLR</original>
    <variation>LPE</variation>
    <location>
        <begin position="193"/>
        <end position="195"/>
    </location>
</feature>
<feature type="helix" evidence="20">
    <location>
        <begin position="40"/>
        <end position="42"/>
    </location>
</feature>
<feature type="strand" evidence="20">
    <location>
        <begin position="43"/>
        <end position="52"/>
    </location>
</feature>
<feature type="strand" evidence="20">
    <location>
        <begin position="55"/>
        <end position="62"/>
    </location>
</feature>
<feature type="turn" evidence="20">
    <location>
        <begin position="63"/>
        <end position="65"/>
    </location>
</feature>
<feature type="strand" evidence="20">
    <location>
        <begin position="68"/>
        <end position="75"/>
    </location>
</feature>
<feature type="helix" evidence="20">
    <location>
        <begin position="76"/>
        <end position="82"/>
    </location>
</feature>
<feature type="helix" evidence="20">
    <location>
        <begin position="85"/>
        <end position="97"/>
    </location>
</feature>
<feature type="strand" evidence="20">
    <location>
        <begin position="106"/>
        <end position="111"/>
    </location>
</feature>
<feature type="strand" evidence="20">
    <location>
        <begin position="113"/>
        <end position="120"/>
    </location>
</feature>
<feature type="helix" evidence="20">
    <location>
        <begin position="128"/>
        <end position="135"/>
    </location>
</feature>
<feature type="helix" evidence="20">
    <location>
        <begin position="140"/>
        <end position="159"/>
    </location>
</feature>
<feature type="helix" evidence="20">
    <location>
        <begin position="169"/>
        <end position="171"/>
    </location>
</feature>
<feature type="strand" evidence="20">
    <location>
        <begin position="172"/>
        <end position="174"/>
    </location>
</feature>
<feature type="strand" evidence="20">
    <location>
        <begin position="180"/>
        <end position="182"/>
    </location>
</feature>
<feature type="helix" evidence="20">
    <location>
        <begin position="203"/>
        <end position="205"/>
    </location>
</feature>
<feature type="helix" evidence="20">
    <location>
        <begin position="208"/>
        <end position="211"/>
    </location>
</feature>
<feature type="helix" evidence="20">
    <location>
        <begin position="220"/>
        <end position="234"/>
    </location>
</feature>
<feature type="helix" evidence="20">
    <location>
        <begin position="244"/>
        <end position="252"/>
    </location>
</feature>
<feature type="helix" evidence="20">
    <location>
        <begin position="264"/>
        <end position="273"/>
    </location>
</feature>
<feature type="helix" evidence="20">
    <location>
        <begin position="278"/>
        <end position="280"/>
    </location>
</feature>
<feature type="helix" evidence="20">
    <location>
        <begin position="284"/>
        <end position="289"/>
    </location>
</feature>
<feature type="helix" evidence="20">
    <location>
        <begin position="291"/>
        <end position="296"/>
    </location>
</feature>
<keyword id="KW-0002">3D-structure</keyword>
<keyword id="KW-0025">Alternative splicing</keyword>
<keyword id="KW-0067">ATP-binding</keyword>
<keyword id="KW-0131">Cell cycle</keyword>
<keyword id="KW-0132">Cell division</keyword>
<keyword id="KW-0137">Centromere</keyword>
<keyword id="KW-0158">Chromosome</keyword>
<keyword id="KW-0963">Cytoplasm</keyword>
<keyword id="KW-0206">Cytoskeleton</keyword>
<keyword id="KW-0418">Kinase</keyword>
<keyword id="KW-0469">Meiosis</keyword>
<keyword id="KW-0498">Mitosis</keyword>
<keyword id="KW-0547">Nucleotide-binding</keyword>
<keyword id="KW-0539">Nucleus</keyword>
<keyword id="KW-0597">Phosphoprotein</keyword>
<keyword id="KW-1267">Proteomics identification</keyword>
<keyword id="KW-1185">Reference proteome</keyword>
<keyword id="KW-0723">Serine/threonine-protein kinase</keyword>
<keyword id="KW-0808">Transferase</keyword>
<evidence type="ECO:0000250" key="1">
    <source>
        <dbReference type="UniProtKB" id="O88445"/>
    </source>
</evidence>
<evidence type="ECO:0000255" key="2">
    <source>
        <dbReference type="PROSITE-ProRule" id="PRU00159"/>
    </source>
</evidence>
<evidence type="ECO:0000255" key="3">
    <source>
        <dbReference type="PROSITE-ProRule" id="PRU10027"/>
    </source>
</evidence>
<evidence type="ECO:0000256" key="4">
    <source>
        <dbReference type="SAM" id="MobiDB-lite"/>
    </source>
</evidence>
<evidence type="ECO:0000269" key="5">
    <source>
    </source>
</evidence>
<evidence type="ECO:0000269" key="6">
    <source>
    </source>
</evidence>
<evidence type="ECO:0000269" key="7">
    <source>
    </source>
</evidence>
<evidence type="ECO:0000269" key="8">
    <source>
    </source>
</evidence>
<evidence type="ECO:0000269" key="9">
    <source>
    </source>
</evidence>
<evidence type="ECO:0000269" key="10">
    <source>
    </source>
</evidence>
<evidence type="ECO:0000269" key="11">
    <source>
    </source>
</evidence>
<evidence type="ECO:0000269" key="12">
    <source>
    </source>
</evidence>
<evidence type="ECO:0000269" key="13">
    <source>
    </source>
</evidence>
<evidence type="ECO:0000269" key="14">
    <source>
    </source>
</evidence>
<evidence type="ECO:0000269" key="15">
    <source>
    </source>
</evidence>
<evidence type="ECO:0000303" key="16">
    <source>
    </source>
</evidence>
<evidence type="ECO:0000303" key="17">
    <source>
    </source>
</evidence>
<evidence type="ECO:0000303" key="18">
    <source>
    </source>
</evidence>
<evidence type="ECO:0000305" key="19"/>
<evidence type="ECO:0007829" key="20">
    <source>
        <dbReference type="PDB" id="6GR8"/>
    </source>
</evidence>
<protein>
    <recommendedName>
        <fullName>Aurora kinase C</fullName>
        <ecNumber>2.7.11.1</ecNumber>
    </recommendedName>
    <alternativeName>
        <fullName>Aurora 3</fullName>
    </alternativeName>
    <alternativeName>
        <fullName>Aurora/IPL1-related kinase 3</fullName>
        <shortName>ARK-3</shortName>
        <shortName>Aurora-related kinase 3</shortName>
    </alternativeName>
    <alternativeName>
        <fullName>Aurora/IPL1/Eg2 protein 2</fullName>
    </alternativeName>
    <alternativeName>
        <fullName>Serine/threonine-protein kinase 13</fullName>
    </alternativeName>
    <alternativeName>
        <fullName>Serine/threonine-protein kinase aurora-C</fullName>
    </alternativeName>
</protein>
<gene>
    <name type="primary">AURKC</name>
    <name type="synonym">AIE2</name>
    <name type="synonym">AIK3</name>
    <name type="synonym">AIRK3</name>
    <name type="synonym">ARK3</name>
    <name type="synonym">STK13</name>
</gene>